<name>RNB_ECO45</name>
<feature type="chain" id="PRO_1000135861" description="Exoribonuclease 2">
    <location>
        <begin position="1"/>
        <end position="644"/>
    </location>
</feature>
<feature type="domain" description="RNB" evidence="1">
    <location>
        <begin position="189"/>
        <end position="516"/>
    </location>
</feature>
<feature type="domain" description="S1 motif" evidence="2">
    <location>
        <begin position="561"/>
        <end position="643"/>
    </location>
</feature>
<proteinExistence type="inferred from homology"/>
<accession>B7MLW3</accession>
<organism>
    <name type="scientific">Escherichia coli O45:K1 (strain S88 / ExPEC)</name>
    <dbReference type="NCBI Taxonomy" id="585035"/>
    <lineage>
        <taxon>Bacteria</taxon>
        <taxon>Pseudomonadati</taxon>
        <taxon>Pseudomonadota</taxon>
        <taxon>Gammaproteobacteria</taxon>
        <taxon>Enterobacterales</taxon>
        <taxon>Enterobacteriaceae</taxon>
        <taxon>Escherichia</taxon>
    </lineage>
</organism>
<reference key="1">
    <citation type="journal article" date="2009" name="PLoS Genet.">
        <title>Organised genome dynamics in the Escherichia coli species results in highly diverse adaptive paths.</title>
        <authorList>
            <person name="Touchon M."/>
            <person name="Hoede C."/>
            <person name="Tenaillon O."/>
            <person name="Barbe V."/>
            <person name="Baeriswyl S."/>
            <person name="Bidet P."/>
            <person name="Bingen E."/>
            <person name="Bonacorsi S."/>
            <person name="Bouchier C."/>
            <person name="Bouvet O."/>
            <person name="Calteau A."/>
            <person name="Chiapello H."/>
            <person name="Clermont O."/>
            <person name="Cruveiller S."/>
            <person name="Danchin A."/>
            <person name="Diard M."/>
            <person name="Dossat C."/>
            <person name="Karoui M.E."/>
            <person name="Frapy E."/>
            <person name="Garry L."/>
            <person name="Ghigo J.M."/>
            <person name="Gilles A.M."/>
            <person name="Johnson J."/>
            <person name="Le Bouguenec C."/>
            <person name="Lescat M."/>
            <person name="Mangenot S."/>
            <person name="Martinez-Jehanne V."/>
            <person name="Matic I."/>
            <person name="Nassif X."/>
            <person name="Oztas S."/>
            <person name="Petit M.A."/>
            <person name="Pichon C."/>
            <person name="Rouy Z."/>
            <person name="Ruf C.S."/>
            <person name="Schneider D."/>
            <person name="Tourret J."/>
            <person name="Vacherie B."/>
            <person name="Vallenet D."/>
            <person name="Medigue C."/>
            <person name="Rocha E.P.C."/>
            <person name="Denamur E."/>
        </authorList>
    </citation>
    <scope>NUCLEOTIDE SEQUENCE [LARGE SCALE GENOMIC DNA]</scope>
    <source>
        <strain>S88 / ExPEC</strain>
    </source>
</reference>
<keyword id="KW-0963">Cytoplasm</keyword>
<keyword id="KW-0269">Exonuclease</keyword>
<keyword id="KW-0378">Hydrolase</keyword>
<keyword id="KW-0540">Nuclease</keyword>
<keyword id="KW-1185">Reference proteome</keyword>
<keyword id="KW-0694">RNA-binding</keyword>
<comment type="function">
    <text evidence="2">Involved in mRNA degradation. Hydrolyzes single-stranded polyribonucleotides processively in the 3' to 5' direction.</text>
</comment>
<comment type="catalytic activity">
    <reaction evidence="2">
        <text>Exonucleolytic cleavage in the 3'- to 5'-direction to yield nucleoside 5'-phosphates.</text>
        <dbReference type="EC" id="3.1.13.1"/>
    </reaction>
</comment>
<comment type="subcellular location">
    <subcellularLocation>
        <location evidence="2">Cytoplasm</location>
    </subcellularLocation>
</comment>
<comment type="similarity">
    <text evidence="2">Belongs to the RNR ribonuclease family. RNase II subfamily.</text>
</comment>
<evidence type="ECO:0000255" key="1"/>
<evidence type="ECO:0000255" key="2">
    <source>
        <dbReference type="HAMAP-Rule" id="MF_01036"/>
    </source>
</evidence>
<gene>
    <name evidence="2" type="primary">rnb</name>
    <name type="ordered locus">ECS88_1428</name>
</gene>
<protein>
    <recommendedName>
        <fullName evidence="2">Exoribonuclease 2</fullName>
        <ecNumber evidence="2">3.1.13.1</ecNumber>
    </recommendedName>
    <alternativeName>
        <fullName evidence="2">Exoribonuclease II</fullName>
        <shortName evidence="2">RNase II</shortName>
        <shortName evidence="2">Ribonuclease II</shortName>
    </alternativeName>
</protein>
<sequence>MFQDNPLLAQLKQQLHSQTPRAEGVVKATEKGFGFLEVDAQKSYFIPPPQMKKVMHGDRIIAVIHSEKERESAEPEELVEPFLTRFVGKVQGKNDRLAIVPDHPLLKDAIPCRAARGLNHEFKEGDWAVAEMRRHPLKGDRSFYAELTQYITFGDDHFVPWWVTLARHNLEKEAPDGVATEMLDEGLVREDLTALDFVTIDSASTEDMDDALFAKALPDGKLQLIVAIADPTAWIAEGSKLDKAAKIRAFTNYLPGFNIPMLPRELSDDLCSLRANEVRPVLACRMTFSTDGTIEDNIEFFAATIESKAKLVYDQVSDWLENTGDWQPESEAIAEQVRLLAQICQRRGEWRHNHALVFKDRPDYRFILGEKGEVLDIVAEPRRIANRIVEEAMIAANICAARVLRDKLGFGIYNVHMGFDPANADALAALLKTHGLHVDAEEVLTLDGFCKLRRELDAQPTGFLDSRIRRFQSFAEISTEPGPHFGLGLEAYATWTSPIRKYGDMINHRLLKAVIKGETATRPQDEITVQMAERRRLNRMAERDVGDWLYARFLKDKAGTDTRFAAEIVDISRGGMRVRLVDNGAIAFIPAPFLHAVRDELVCSQENGTVQIKGETAYKVTDVIDVTIAEVRMETRSIIARPVA</sequence>
<dbReference type="EC" id="3.1.13.1" evidence="2"/>
<dbReference type="EMBL" id="CU928161">
    <property type="protein sequence ID" value="CAR02749.1"/>
    <property type="molecule type" value="Genomic_DNA"/>
</dbReference>
<dbReference type="RefSeq" id="WP_000485006.1">
    <property type="nucleotide sequence ID" value="NC_011742.1"/>
</dbReference>
<dbReference type="SMR" id="B7MLW3"/>
<dbReference type="KEGG" id="ecz:ECS88_1428"/>
<dbReference type="HOGENOM" id="CLU_002333_7_3_6"/>
<dbReference type="Proteomes" id="UP000000747">
    <property type="component" value="Chromosome"/>
</dbReference>
<dbReference type="GO" id="GO:0005829">
    <property type="term" value="C:cytosol"/>
    <property type="evidence" value="ECO:0007669"/>
    <property type="project" value="TreeGrafter"/>
</dbReference>
<dbReference type="GO" id="GO:0008859">
    <property type="term" value="F:exoribonuclease II activity"/>
    <property type="evidence" value="ECO:0007669"/>
    <property type="project" value="UniProtKB-UniRule"/>
</dbReference>
<dbReference type="GO" id="GO:0003723">
    <property type="term" value="F:RNA binding"/>
    <property type="evidence" value="ECO:0007669"/>
    <property type="project" value="UniProtKB-KW"/>
</dbReference>
<dbReference type="GO" id="GO:0006402">
    <property type="term" value="P:mRNA catabolic process"/>
    <property type="evidence" value="ECO:0007669"/>
    <property type="project" value="UniProtKB-UniRule"/>
</dbReference>
<dbReference type="FunFam" id="2.40.50.140:FF:000079">
    <property type="entry name" value="Exoribonuclease 2"/>
    <property type="match status" value="1"/>
</dbReference>
<dbReference type="FunFam" id="2.40.50.140:FF:000081">
    <property type="entry name" value="Exoribonuclease 2"/>
    <property type="match status" value="1"/>
</dbReference>
<dbReference type="FunFam" id="2.40.50.640:FF:000001">
    <property type="entry name" value="Exoribonuclease 2"/>
    <property type="match status" value="1"/>
</dbReference>
<dbReference type="Gene3D" id="2.40.50.640">
    <property type="match status" value="1"/>
</dbReference>
<dbReference type="Gene3D" id="2.40.50.140">
    <property type="entry name" value="Nucleic acid-binding proteins"/>
    <property type="match status" value="2"/>
</dbReference>
<dbReference type="HAMAP" id="MF_01036">
    <property type="entry name" value="RNase_II"/>
    <property type="match status" value="1"/>
</dbReference>
<dbReference type="InterPro" id="IPR011129">
    <property type="entry name" value="CSD"/>
</dbReference>
<dbReference type="InterPro" id="IPR012340">
    <property type="entry name" value="NA-bd_OB-fold"/>
</dbReference>
<dbReference type="InterPro" id="IPR013223">
    <property type="entry name" value="RNase_B_OB_dom"/>
</dbReference>
<dbReference type="InterPro" id="IPR011804">
    <property type="entry name" value="RNase_II"/>
</dbReference>
<dbReference type="InterPro" id="IPR001900">
    <property type="entry name" value="RNase_II/R"/>
</dbReference>
<dbReference type="InterPro" id="IPR022966">
    <property type="entry name" value="RNase_II/R_CS"/>
</dbReference>
<dbReference type="InterPro" id="IPR004476">
    <property type="entry name" value="RNase_II/RNase_R"/>
</dbReference>
<dbReference type="InterPro" id="IPR050180">
    <property type="entry name" value="RNR_Ribonuclease"/>
</dbReference>
<dbReference type="InterPro" id="IPR003029">
    <property type="entry name" value="S1_domain"/>
</dbReference>
<dbReference type="NCBIfam" id="TIGR00358">
    <property type="entry name" value="3_prime_RNase"/>
    <property type="match status" value="1"/>
</dbReference>
<dbReference type="NCBIfam" id="NF003455">
    <property type="entry name" value="PRK05054.1"/>
    <property type="match status" value="1"/>
</dbReference>
<dbReference type="NCBIfam" id="TIGR02062">
    <property type="entry name" value="RNase_B"/>
    <property type="match status" value="1"/>
</dbReference>
<dbReference type="PANTHER" id="PTHR23355:SF37">
    <property type="entry name" value="EXORIBONUCLEASE 2"/>
    <property type="match status" value="1"/>
</dbReference>
<dbReference type="PANTHER" id="PTHR23355">
    <property type="entry name" value="RIBONUCLEASE"/>
    <property type="match status" value="1"/>
</dbReference>
<dbReference type="Pfam" id="PF08206">
    <property type="entry name" value="OB_RNB"/>
    <property type="match status" value="1"/>
</dbReference>
<dbReference type="Pfam" id="PF00773">
    <property type="entry name" value="RNB"/>
    <property type="match status" value="1"/>
</dbReference>
<dbReference type="Pfam" id="PF00575">
    <property type="entry name" value="S1"/>
    <property type="match status" value="1"/>
</dbReference>
<dbReference type="SMART" id="SM00357">
    <property type="entry name" value="CSP"/>
    <property type="match status" value="1"/>
</dbReference>
<dbReference type="SMART" id="SM00955">
    <property type="entry name" value="RNB"/>
    <property type="match status" value="1"/>
</dbReference>
<dbReference type="SUPFAM" id="SSF50249">
    <property type="entry name" value="Nucleic acid-binding proteins"/>
    <property type="match status" value="4"/>
</dbReference>
<dbReference type="PROSITE" id="PS01175">
    <property type="entry name" value="RIBONUCLEASE_II"/>
    <property type="match status" value="1"/>
</dbReference>